<sequence>MAAALLARAGGSLGRALRARDWRRLHTVYQSVELPETHQMLRQTCRDFAEKELVPIAAQLDKEHLFPTSQVKKMGELGLLAMDVPEELSGAGLDYLAYSIALEEISRGCASTGVIMSVNNSLYLGPILKFGSSQQKQQWITPFTNGDKIGCFALSEPGNGSDAGAASTTAREEGDSWVLNGTKAWITNSWEASATVVFASTDRSRQNKGISAFLVPMPTPGLTLGKKEDKLGIRASSTANLIFEDCRIPKENLLGEPGMGFKIAMQTLDMGRIGIASQALGIAQASLDCAVKYAENRHAFGAPLTKLQNIQFKLADMALALESARLLTWRAAMLKDNKKPFTKESAMAKLAASEAATAISHQAIQILGGMGYVTEMPAERYYRDARITEIYEGTSEIQRLVIAGHLLRSYRS</sequence>
<comment type="function">
    <text evidence="5 6">Short-chain specific acyl-CoA dehydrogenase is one of the acyl-CoA dehydrogenases that catalyze the first step of mitochondrial fatty acid beta-oxidation, an aerobic process breaking down fatty acids into acetyl-CoA and allowing the production of energy from fats (PubMed:3968063). The first step of fatty acid beta-oxidation consists in the removal of one hydrogen from C-2 and C-3 of the straight-chain fatty acyl-CoA thioester, resulting in the formation of trans-2-enoyl-CoA (PubMed:3968063). Among the different mitochondrial acyl-CoA dehydrogenases, short-chain specific acyl-CoA dehydrogenase acts specifically on acyl-CoAs with saturated 4 to 6 carbons long primary chains (PubMed:3968063).</text>
</comment>
<comment type="catalytic activity">
    <reaction evidence="5">
        <text>a short-chain 2,3-saturated fatty acyl-CoA + oxidized [electron-transfer flavoprotein] + H(+) = a short-chain (2E)-enoyl-CoA + reduced [electron-transfer flavoprotein]</text>
        <dbReference type="Rhea" id="RHEA:47196"/>
        <dbReference type="Rhea" id="RHEA-COMP:10685"/>
        <dbReference type="Rhea" id="RHEA-COMP:10686"/>
        <dbReference type="ChEBI" id="CHEBI:15378"/>
        <dbReference type="ChEBI" id="CHEBI:57692"/>
        <dbReference type="ChEBI" id="CHEBI:58307"/>
        <dbReference type="ChEBI" id="CHEBI:87487"/>
        <dbReference type="ChEBI" id="CHEBI:87488"/>
        <dbReference type="EC" id="1.3.8.1"/>
    </reaction>
</comment>
<comment type="catalytic activity">
    <reaction evidence="5">
        <text>butanoyl-CoA + oxidized [electron-transfer flavoprotein] + H(+) = (2E)-butenoyl-CoA + reduced [electron-transfer flavoprotein]</text>
        <dbReference type="Rhea" id="RHEA:24004"/>
        <dbReference type="Rhea" id="RHEA-COMP:10685"/>
        <dbReference type="Rhea" id="RHEA-COMP:10686"/>
        <dbReference type="ChEBI" id="CHEBI:15378"/>
        <dbReference type="ChEBI" id="CHEBI:57332"/>
        <dbReference type="ChEBI" id="CHEBI:57371"/>
        <dbReference type="ChEBI" id="CHEBI:57692"/>
        <dbReference type="ChEBI" id="CHEBI:58307"/>
        <dbReference type="EC" id="1.3.8.1"/>
    </reaction>
    <physiologicalReaction direction="left-to-right" evidence="8">
        <dbReference type="Rhea" id="RHEA:24005"/>
    </physiologicalReaction>
</comment>
<comment type="catalytic activity">
    <reaction evidence="5">
        <text>pentanoyl-CoA + oxidized [electron-transfer flavoprotein] + H(+) = (2E)-pentenoyl-CoA + reduced [electron-transfer flavoprotein]</text>
        <dbReference type="Rhea" id="RHEA:43456"/>
        <dbReference type="Rhea" id="RHEA-COMP:10685"/>
        <dbReference type="Rhea" id="RHEA-COMP:10686"/>
        <dbReference type="ChEBI" id="CHEBI:15378"/>
        <dbReference type="ChEBI" id="CHEBI:57389"/>
        <dbReference type="ChEBI" id="CHEBI:57692"/>
        <dbReference type="ChEBI" id="CHEBI:58307"/>
        <dbReference type="ChEBI" id="CHEBI:86160"/>
    </reaction>
    <physiologicalReaction direction="left-to-right" evidence="8">
        <dbReference type="Rhea" id="RHEA:43457"/>
    </physiologicalReaction>
</comment>
<comment type="catalytic activity">
    <reaction evidence="5">
        <text>hexanoyl-CoA + oxidized [electron-transfer flavoprotein] + H(+) = (2E)-hexenoyl-CoA + reduced [electron-transfer flavoprotein]</text>
        <dbReference type="Rhea" id="RHEA:43464"/>
        <dbReference type="Rhea" id="RHEA-COMP:10685"/>
        <dbReference type="Rhea" id="RHEA-COMP:10686"/>
        <dbReference type="ChEBI" id="CHEBI:15378"/>
        <dbReference type="ChEBI" id="CHEBI:57692"/>
        <dbReference type="ChEBI" id="CHEBI:58307"/>
        <dbReference type="ChEBI" id="CHEBI:62077"/>
        <dbReference type="ChEBI" id="CHEBI:62620"/>
    </reaction>
    <physiologicalReaction direction="left-to-right" evidence="8">
        <dbReference type="Rhea" id="RHEA:43465"/>
    </physiologicalReaction>
</comment>
<comment type="cofactor">
    <cofactor evidence="3 5">
        <name>FAD</name>
        <dbReference type="ChEBI" id="CHEBI:57692"/>
    </cofactor>
    <text evidence="3 5">Binds 1 FAD per subunit.</text>
</comment>
<comment type="biophysicochemical properties">
    <kinetics>
        <KM evidence="5">10.7 uM for butanoyl-CoA</KM>
        <KM evidence="5">32.9 uM for pentanoyl-CoA</KM>
        <KM evidence="5">285 uM for hexanoyl-CoA</KM>
    </kinetics>
</comment>
<comment type="pathway">
    <text evidence="8">Lipid metabolism; mitochondrial fatty acid beta-oxidation.</text>
</comment>
<comment type="subunit">
    <text evidence="3 5">Homotetramer.</text>
</comment>
<comment type="subcellular location">
    <subcellularLocation>
        <location evidence="2">Mitochondrion matrix</location>
    </subcellularLocation>
</comment>
<comment type="similarity">
    <text evidence="7">Belongs to the acyl-CoA dehydrogenase family.</text>
</comment>
<comment type="sequence caution" evidence="7">
    <conflict type="erroneous initiation">
        <sequence resource="EMBL-CDS" id="AAA40669"/>
    </conflict>
    <text>Extended N-terminus.</text>
</comment>
<organism>
    <name type="scientific">Rattus norvegicus</name>
    <name type="common">Rat</name>
    <dbReference type="NCBI Taxonomy" id="10116"/>
    <lineage>
        <taxon>Eukaryota</taxon>
        <taxon>Metazoa</taxon>
        <taxon>Chordata</taxon>
        <taxon>Craniata</taxon>
        <taxon>Vertebrata</taxon>
        <taxon>Euteleostomi</taxon>
        <taxon>Mammalia</taxon>
        <taxon>Eutheria</taxon>
        <taxon>Euarchontoglires</taxon>
        <taxon>Glires</taxon>
        <taxon>Rodentia</taxon>
        <taxon>Myomorpha</taxon>
        <taxon>Muroidea</taxon>
        <taxon>Muridae</taxon>
        <taxon>Murinae</taxon>
        <taxon>Rattus</taxon>
    </lineage>
</organism>
<keyword id="KW-0002">3D-structure</keyword>
<keyword id="KW-0007">Acetylation</keyword>
<keyword id="KW-0903">Direct protein sequencing</keyword>
<keyword id="KW-0274">FAD</keyword>
<keyword id="KW-0276">Fatty acid metabolism</keyword>
<keyword id="KW-0285">Flavoprotein</keyword>
<keyword id="KW-0443">Lipid metabolism</keyword>
<keyword id="KW-0496">Mitochondrion</keyword>
<keyword id="KW-0560">Oxidoreductase</keyword>
<keyword id="KW-0597">Phosphoprotein</keyword>
<keyword id="KW-1185">Reference proteome</keyword>
<keyword id="KW-0809">Transit peptide</keyword>
<proteinExistence type="evidence at protein level"/>
<protein>
    <recommendedName>
        <fullName>Short-chain specific acyl-CoA dehydrogenase, mitochondrial</fullName>
        <shortName>SCAD</shortName>
        <ecNumber evidence="5">1.3.8.1</ecNumber>
    </recommendedName>
    <alternativeName>
        <fullName>Butyryl-CoA dehydrogenase</fullName>
    </alternativeName>
</protein>
<feature type="transit peptide" description="Mitochondrion" evidence="4">
    <location>
        <begin position="1"/>
        <end position="24"/>
    </location>
</feature>
<feature type="chain" id="PRO_0000000501" description="Short-chain specific acyl-CoA dehydrogenase, mitochondrial">
    <location>
        <begin position="25"/>
        <end position="412"/>
    </location>
</feature>
<feature type="active site" description="Proton acceptor" evidence="3">
    <location>
        <position position="392"/>
    </location>
</feature>
<feature type="binding site" evidence="3">
    <location>
        <begin position="152"/>
        <end position="161"/>
    </location>
    <ligand>
        <name>FAD</name>
        <dbReference type="ChEBI" id="CHEBI:57692"/>
    </ligand>
</feature>
<feature type="binding site" evidence="3">
    <location>
        <position position="161"/>
    </location>
    <ligand>
        <name>substrate</name>
    </ligand>
</feature>
<feature type="binding site" evidence="3">
    <location>
        <begin position="185"/>
        <end position="187"/>
    </location>
    <ligand>
        <name>FAD</name>
        <dbReference type="ChEBI" id="CHEBI:57692"/>
    </ligand>
</feature>
<feature type="binding site" evidence="3">
    <location>
        <begin position="269"/>
        <end position="272"/>
    </location>
    <ligand>
        <name>substrate</name>
    </ligand>
</feature>
<feature type="binding site" evidence="3">
    <location>
        <position position="297"/>
    </location>
    <ligand>
        <name>FAD</name>
        <dbReference type="ChEBI" id="CHEBI:57692"/>
    </ligand>
</feature>
<feature type="binding site" evidence="3">
    <location>
        <begin position="365"/>
        <end position="369"/>
    </location>
    <ligand>
        <name>FAD</name>
        <dbReference type="ChEBI" id="CHEBI:57692"/>
    </ligand>
</feature>
<feature type="binding site" evidence="3">
    <location>
        <begin position="394"/>
        <end position="396"/>
    </location>
    <ligand>
        <name>FAD</name>
        <dbReference type="ChEBI" id="CHEBI:57692"/>
    </ligand>
</feature>
<feature type="modified residue" description="Phosphothreonine" evidence="1">
    <location>
        <position position="27"/>
    </location>
</feature>
<feature type="modified residue" description="N6-acetyllysine; alternate" evidence="1">
    <location>
        <position position="51"/>
    </location>
</feature>
<feature type="modified residue" description="N6-succinyllysine; alternate" evidence="1">
    <location>
        <position position="51"/>
    </location>
</feature>
<feature type="modified residue" description="N6-acetyllysine" evidence="1">
    <location>
        <position position="72"/>
    </location>
</feature>
<feature type="modified residue" description="N6-acetyllysine; alternate" evidence="1">
    <location>
        <position position="129"/>
    </location>
</feature>
<feature type="modified residue" description="N6-succinyllysine; alternate" evidence="1">
    <location>
        <position position="129"/>
    </location>
</feature>
<feature type="modified residue" description="N6-acetyllysine" evidence="1">
    <location>
        <position position="208"/>
    </location>
</feature>
<feature type="modified residue" description="N6-acetyllysine; alternate" evidence="1">
    <location>
        <position position="262"/>
    </location>
</feature>
<feature type="modified residue" description="N6-succinyllysine; alternate" evidence="1">
    <location>
        <position position="262"/>
    </location>
</feature>
<feature type="modified residue" description="N6-acetyllysine" evidence="1">
    <location>
        <position position="292"/>
    </location>
</feature>
<feature type="modified residue" description="N6-acetyllysine; alternate" evidence="1">
    <location>
        <position position="306"/>
    </location>
</feature>
<feature type="modified residue" description="N6-succinyllysine; alternate" evidence="1">
    <location>
        <position position="306"/>
    </location>
</feature>
<feature type="helix" evidence="9">
    <location>
        <begin position="36"/>
        <end position="52"/>
    </location>
</feature>
<feature type="turn" evidence="9">
    <location>
        <begin position="53"/>
        <end position="56"/>
    </location>
</feature>
<feature type="helix" evidence="9">
    <location>
        <begin position="57"/>
        <end position="63"/>
    </location>
</feature>
<feature type="helix" evidence="9">
    <location>
        <begin position="68"/>
        <end position="77"/>
    </location>
</feature>
<feature type="turn" evidence="9">
    <location>
        <begin position="78"/>
        <end position="80"/>
    </location>
</feature>
<feature type="strand" evidence="9">
    <location>
        <begin position="81"/>
        <end position="84"/>
    </location>
</feature>
<feature type="helix" evidence="9">
    <location>
        <begin position="86"/>
        <end position="88"/>
    </location>
</feature>
<feature type="helix" evidence="9">
    <location>
        <begin position="95"/>
        <end position="108"/>
    </location>
</feature>
<feature type="helix" evidence="9">
    <location>
        <begin position="110"/>
        <end position="121"/>
    </location>
</feature>
<feature type="helix" evidence="9">
    <location>
        <begin position="124"/>
        <end position="130"/>
    </location>
</feature>
<feature type="helix" evidence="9">
    <location>
        <begin position="133"/>
        <end position="139"/>
    </location>
</feature>
<feature type="helix" evidence="9">
    <location>
        <begin position="141"/>
        <end position="143"/>
    </location>
</feature>
<feature type="strand" evidence="9">
    <location>
        <begin position="144"/>
        <end position="147"/>
    </location>
</feature>
<feature type="strand" evidence="9">
    <location>
        <begin position="150"/>
        <end position="153"/>
    </location>
</feature>
<feature type="strand" evidence="9">
    <location>
        <begin position="159"/>
        <end position="162"/>
    </location>
</feature>
<feature type="strand" evidence="9">
    <location>
        <begin position="169"/>
        <end position="172"/>
    </location>
</feature>
<feature type="strand" evidence="9">
    <location>
        <begin position="174"/>
        <end position="187"/>
    </location>
</feature>
<feature type="turn" evidence="9">
    <location>
        <begin position="188"/>
        <end position="191"/>
    </location>
</feature>
<feature type="strand" evidence="9">
    <location>
        <begin position="193"/>
        <end position="201"/>
    </location>
</feature>
<feature type="helix" evidence="9">
    <location>
        <begin position="203"/>
        <end position="208"/>
    </location>
</feature>
<feature type="strand" evidence="9">
    <location>
        <begin position="209"/>
        <end position="218"/>
    </location>
</feature>
<feature type="strand" evidence="9">
    <location>
        <begin position="222"/>
        <end position="224"/>
    </location>
</feature>
<feature type="strand" evidence="9">
    <location>
        <begin position="230"/>
        <end position="232"/>
    </location>
</feature>
<feature type="strand" evidence="9">
    <location>
        <begin position="238"/>
        <end position="249"/>
    </location>
</feature>
<feature type="helix" evidence="9">
    <location>
        <begin position="250"/>
        <end position="252"/>
    </location>
</feature>
<feature type="strand" evidence="9">
    <location>
        <begin position="253"/>
        <end position="256"/>
    </location>
</feature>
<feature type="helix" evidence="9">
    <location>
        <begin position="260"/>
        <end position="296"/>
    </location>
</feature>
<feature type="strand" evidence="9">
    <location>
        <begin position="298"/>
        <end position="303"/>
    </location>
</feature>
<feature type="helix" evidence="9">
    <location>
        <begin position="304"/>
        <end position="306"/>
    </location>
</feature>
<feature type="helix" evidence="9">
    <location>
        <begin position="308"/>
        <end position="336"/>
    </location>
</feature>
<feature type="helix" evidence="9">
    <location>
        <begin position="342"/>
        <end position="367"/>
    </location>
</feature>
<feature type="helix" evidence="9">
    <location>
        <begin position="368"/>
        <end position="371"/>
    </location>
</feature>
<feature type="helix" evidence="9">
    <location>
        <begin position="378"/>
        <end position="385"/>
    </location>
</feature>
<feature type="helix" evidence="9">
    <location>
        <begin position="386"/>
        <end position="389"/>
    </location>
</feature>
<feature type="turn" evidence="9">
    <location>
        <begin position="390"/>
        <end position="392"/>
    </location>
</feature>
<feature type="helix" evidence="9">
    <location>
        <begin position="395"/>
        <end position="410"/>
    </location>
</feature>
<evidence type="ECO:0000250" key="1">
    <source>
        <dbReference type="UniProtKB" id="Q07417"/>
    </source>
</evidence>
<evidence type="ECO:0000250" key="2">
    <source>
        <dbReference type="UniProtKB" id="Q3ZBF6"/>
    </source>
</evidence>
<evidence type="ECO:0000269" key="3">
    <source>
    </source>
</evidence>
<evidence type="ECO:0000269" key="4">
    <source>
    </source>
</evidence>
<evidence type="ECO:0000269" key="5">
    <source>
    </source>
</evidence>
<evidence type="ECO:0000303" key="6">
    <source>
    </source>
</evidence>
<evidence type="ECO:0000305" key="7"/>
<evidence type="ECO:0000305" key="8">
    <source>
    </source>
</evidence>
<evidence type="ECO:0007829" key="9">
    <source>
        <dbReference type="PDB" id="1JQI"/>
    </source>
</evidence>
<reference key="1">
    <citation type="journal article" date="1989" name="J. Biol. Chem.">
        <title>Molecular cloning and nucleotide sequence of cDNAs encoding the precursors of rat long chain acyl-coenzyme A, short chain acyl-coenzyme A, and isovaleryl-coenzyme A dehydrogenases. Sequence homology of four enzymes of the acyl-CoA dehydrogenase family.</title>
        <authorList>
            <person name="Matsubara Y."/>
            <person name="Indo Y."/>
            <person name="Naito E."/>
            <person name="Ozasa H."/>
            <person name="Glassberg R."/>
            <person name="Vockley J."/>
            <person name="Ikeda Y."/>
            <person name="Kraus J."/>
            <person name="Tanaka K."/>
        </authorList>
    </citation>
    <scope>NUCLEOTIDE SEQUENCE [MRNA]</scope>
    <scope>PROTEIN SEQUENCE OF 25-51; 235-250; 314-325 AND 350-379</scope>
</reference>
<reference key="2">
    <citation type="journal article" date="1985" name="J. Biol. Chem.">
        <title>Purification and characterization of short-chain, medium-chain, and long-chain acyl-CoA dehydrogenases from rat liver mitochondria. Isolation of the holo- and apoenzymes and conversion of the apoenzyme to the holoenzyme.</title>
        <authorList>
            <person name="Ikeda Y."/>
            <person name="Okamura-Ikeda K."/>
            <person name="Tanaka K."/>
        </authorList>
    </citation>
    <scope>FUNCTION</scope>
    <scope>CATALYTIC ACTIVITY</scope>
    <scope>SUBUNIT</scope>
    <scope>COFACTOR</scope>
    <scope>BIOPHYSICOCHEMICAL PROPERTIES</scope>
    <scope>SUBSTRATE SPECIFICITY</scope>
    <scope>PATHWAY</scope>
</reference>
<reference key="3">
    <citation type="journal article" date="2002" name="J. Biol. Chem.">
        <title>Crystal structure of rat short chain acyl-CoA dehydrogenase complexed with acetoacetyl-CoA: comparison with other acyl-CoA dehydrogenases.</title>
        <authorList>
            <person name="Battaile K.P."/>
            <person name="Molin-Case J."/>
            <person name="Paschke R."/>
            <person name="Wang M."/>
            <person name="Bennett D."/>
            <person name="Vockley J."/>
            <person name="Kim J.-J.P."/>
        </authorList>
    </citation>
    <scope>X-RAY CRYSTALLOGRAPHY (2.25 ANGSTROMS) OF 25-412 IN COMPLEX WITH THE SUBSTRATE ANALOG ACETOACETYL-COA AND FAD</scope>
    <scope>COFACTOR</scope>
    <scope>SUBUNIT</scope>
    <scope>ACTIVE SITE</scope>
</reference>
<dbReference type="EC" id="1.3.8.1" evidence="5"/>
<dbReference type="EMBL" id="J05030">
    <property type="protein sequence ID" value="AAA40669.1"/>
    <property type="status" value="ALT_INIT"/>
    <property type="molecule type" value="mRNA"/>
</dbReference>
<dbReference type="PIR" id="B34252">
    <property type="entry name" value="B34252"/>
</dbReference>
<dbReference type="RefSeq" id="NP_071957.1">
    <property type="nucleotide sequence ID" value="NM_022512.2"/>
</dbReference>
<dbReference type="PDB" id="1JQI">
    <property type="method" value="X-ray"/>
    <property type="resolution" value="2.25 A"/>
    <property type="chains" value="A/B=25-412"/>
</dbReference>
<dbReference type="PDBsum" id="1JQI"/>
<dbReference type="SMR" id="P15651"/>
<dbReference type="BioGRID" id="249019">
    <property type="interactions" value="3"/>
</dbReference>
<dbReference type="FunCoup" id="P15651">
    <property type="interactions" value="1050"/>
</dbReference>
<dbReference type="IntAct" id="P15651">
    <property type="interactions" value="15"/>
</dbReference>
<dbReference type="STRING" id="10116.ENSRNOP00000001556"/>
<dbReference type="ChEMBL" id="CHEMBL2176825"/>
<dbReference type="CarbonylDB" id="P15651"/>
<dbReference type="GlyGen" id="P15651">
    <property type="glycosylation" value="3 sites, 1 O-linked glycan (2 sites)"/>
</dbReference>
<dbReference type="iPTMnet" id="P15651"/>
<dbReference type="PhosphoSitePlus" id="P15651"/>
<dbReference type="jPOST" id="P15651"/>
<dbReference type="PaxDb" id="10116-ENSRNOP00000001556"/>
<dbReference type="GeneID" id="64304"/>
<dbReference type="KEGG" id="rno:64304"/>
<dbReference type="UCSC" id="RGD:620514">
    <property type="organism name" value="rat"/>
</dbReference>
<dbReference type="AGR" id="RGD:620514"/>
<dbReference type="CTD" id="35"/>
<dbReference type="RGD" id="620514">
    <property type="gene designation" value="Acads"/>
</dbReference>
<dbReference type="eggNOG" id="KOG0139">
    <property type="taxonomic scope" value="Eukaryota"/>
</dbReference>
<dbReference type="InParanoid" id="P15651"/>
<dbReference type="OrthoDB" id="37319at9989"/>
<dbReference type="BRENDA" id="1.3.8.1">
    <property type="organism ID" value="5301"/>
</dbReference>
<dbReference type="Reactome" id="R-RNO-77350">
    <property type="pathway name" value="Beta oxidation of hexanoyl-CoA to butanoyl-CoA"/>
</dbReference>
<dbReference type="Reactome" id="R-RNO-77352">
    <property type="pathway name" value="Beta oxidation of butanoyl-CoA to acetyl-CoA"/>
</dbReference>
<dbReference type="SABIO-RK" id="P15651"/>
<dbReference type="UniPathway" id="UPA00660"/>
<dbReference type="EvolutionaryTrace" id="P15651"/>
<dbReference type="PRO" id="PR:P15651"/>
<dbReference type="Proteomes" id="UP000002494">
    <property type="component" value="Unplaced"/>
</dbReference>
<dbReference type="GO" id="GO:0005759">
    <property type="term" value="C:mitochondrial matrix"/>
    <property type="evidence" value="ECO:0000314"/>
    <property type="project" value="BHF-UCL"/>
</dbReference>
<dbReference type="GO" id="GO:0031966">
    <property type="term" value="C:mitochondrial membrane"/>
    <property type="evidence" value="ECO:0000314"/>
    <property type="project" value="BHF-UCL"/>
</dbReference>
<dbReference type="GO" id="GO:0005739">
    <property type="term" value="C:mitochondrion"/>
    <property type="evidence" value="ECO:0000266"/>
    <property type="project" value="RGD"/>
</dbReference>
<dbReference type="GO" id="GO:0003995">
    <property type="term" value="F:acyl-CoA dehydrogenase activity"/>
    <property type="evidence" value="ECO:0000314"/>
    <property type="project" value="RGD"/>
</dbReference>
<dbReference type="GO" id="GO:0071949">
    <property type="term" value="F:FAD binding"/>
    <property type="evidence" value="ECO:0000314"/>
    <property type="project" value="RGD"/>
</dbReference>
<dbReference type="GO" id="GO:0050660">
    <property type="term" value="F:flavin adenine dinucleotide binding"/>
    <property type="evidence" value="ECO:0000314"/>
    <property type="project" value="RGD"/>
</dbReference>
<dbReference type="GO" id="GO:0042803">
    <property type="term" value="F:protein homodimerization activity"/>
    <property type="evidence" value="ECO:0000314"/>
    <property type="project" value="RGD"/>
</dbReference>
<dbReference type="GO" id="GO:0016937">
    <property type="term" value="F:short-chain fatty acyl-CoA dehydrogenase activity"/>
    <property type="evidence" value="ECO:0000318"/>
    <property type="project" value="GO_Central"/>
</dbReference>
<dbReference type="GO" id="GO:0046359">
    <property type="term" value="P:butyrate catabolic process"/>
    <property type="evidence" value="ECO:0000314"/>
    <property type="project" value="RGD"/>
</dbReference>
<dbReference type="GO" id="GO:0033539">
    <property type="term" value="P:fatty acid beta-oxidation using acyl-CoA dehydrogenase"/>
    <property type="evidence" value="ECO:0000314"/>
    <property type="project" value="RGD"/>
</dbReference>
<dbReference type="GO" id="GO:0051384">
    <property type="term" value="P:response to glucocorticoid"/>
    <property type="evidence" value="ECO:0000270"/>
    <property type="project" value="RGD"/>
</dbReference>
<dbReference type="GO" id="GO:0042594">
    <property type="term" value="P:response to starvation"/>
    <property type="evidence" value="ECO:0000270"/>
    <property type="project" value="RGD"/>
</dbReference>
<dbReference type="CDD" id="cd01158">
    <property type="entry name" value="SCAD_SBCAD"/>
    <property type="match status" value="1"/>
</dbReference>
<dbReference type="FunFam" id="1.10.540.10:FF:000002">
    <property type="entry name" value="Acyl-CoA dehydrogenase FadE19"/>
    <property type="match status" value="1"/>
</dbReference>
<dbReference type="FunFam" id="1.20.140.10:FF:000004">
    <property type="entry name" value="Acyl-CoA dehydrogenase FadE25"/>
    <property type="match status" value="1"/>
</dbReference>
<dbReference type="FunFam" id="2.40.110.10:FF:000001">
    <property type="entry name" value="Acyl-CoA dehydrogenase, mitochondrial"/>
    <property type="match status" value="1"/>
</dbReference>
<dbReference type="Gene3D" id="1.10.540.10">
    <property type="entry name" value="Acyl-CoA dehydrogenase/oxidase, N-terminal domain"/>
    <property type="match status" value="1"/>
</dbReference>
<dbReference type="Gene3D" id="2.40.110.10">
    <property type="entry name" value="Butyryl-CoA Dehydrogenase, subunit A, domain 2"/>
    <property type="match status" value="1"/>
</dbReference>
<dbReference type="Gene3D" id="1.20.140.10">
    <property type="entry name" value="Butyryl-CoA Dehydrogenase, subunit A, domain 3"/>
    <property type="match status" value="1"/>
</dbReference>
<dbReference type="InterPro" id="IPR006089">
    <property type="entry name" value="Acyl-CoA_DH_CS"/>
</dbReference>
<dbReference type="InterPro" id="IPR006091">
    <property type="entry name" value="Acyl-CoA_Oxase/DH_mid-dom"/>
</dbReference>
<dbReference type="InterPro" id="IPR046373">
    <property type="entry name" value="Acyl-CoA_Oxase/DH_mid-dom_sf"/>
</dbReference>
<dbReference type="InterPro" id="IPR036250">
    <property type="entry name" value="AcylCo_DH-like_C"/>
</dbReference>
<dbReference type="InterPro" id="IPR009075">
    <property type="entry name" value="AcylCo_DH/oxidase_C"/>
</dbReference>
<dbReference type="InterPro" id="IPR013786">
    <property type="entry name" value="AcylCoA_DH/ox_N"/>
</dbReference>
<dbReference type="InterPro" id="IPR037069">
    <property type="entry name" value="AcylCoA_DH/ox_N_sf"/>
</dbReference>
<dbReference type="InterPro" id="IPR009100">
    <property type="entry name" value="AcylCoA_DH/oxidase_NM_dom_sf"/>
</dbReference>
<dbReference type="PANTHER" id="PTHR43884">
    <property type="entry name" value="ACYL-COA DEHYDROGENASE"/>
    <property type="match status" value="1"/>
</dbReference>
<dbReference type="PANTHER" id="PTHR43884:SF12">
    <property type="entry name" value="ISOVALERYL-COA DEHYDROGENASE, MITOCHONDRIAL-RELATED"/>
    <property type="match status" value="1"/>
</dbReference>
<dbReference type="Pfam" id="PF00441">
    <property type="entry name" value="Acyl-CoA_dh_1"/>
    <property type="match status" value="1"/>
</dbReference>
<dbReference type="Pfam" id="PF02770">
    <property type="entry name" value="Acyl-CoA_dh_M"/>
    <property type="match status" value="1"/>
</dbReference>
<dbReference type="Pfam" id="PF02771">
    <property type="entry name" value="Acyl-CoA_dh_N"/>
    <property type="match status" value="1"/>
</dbReference>
<dbReference type="PIRSF" id="PIRSF016578">
    <property type="entry name" value="HsaA"/>
    <property type="match status" value="1"/>
</dbReference>
<dbReference type="SUPFAM" id="SSF47203">
    <property type="entry name" value="Acyl-CoA dehydrogenase C-terminal domain-like"/>
    <property type="match status" value="1"/>
</dbReference>
<dbReference type="SUPFAM" id="SSF56645">
    <property type="entry name" value="Acyl-CoA dehydrogenase NM domain-like"/>
    <property type="match status" value="1"/>
</dbReference>
<dbReference type="PROSITE" id="PS00072">
    <property type="entry name" value="ACYL_COA_DH_1"/>
    <property type="match status" value="1"/>
</dbReference>
<dbReference type="PROSITE" id="PS00073">
    <property type="entry name" value="ACYL_COA_DH_2"/>
    <property type="match status" value="1"/>
</dbReference>
<gene>
    <name type="primary">Acads</name>
</gene>
<accession>P15651</accession>
<name>ACADS_RAT</name>